<protein>
    <recommendedName>
        <fullName>Protein hunchback</fullName>
    </recommendedName>
</protein>
<keyword id="KW-0217">Developmental protein</keyword>
<keyword id="KW-0238">DNA-binding</keyword>
<keyword id="KW-0302">Gap protein</keyword>
<keyword id="KW-0479">Metal-binding</keyword>
<keyword id="KW-0539">Nucleus</keyword>
<keyword id="KW-0677">Repeat</keyword>
<keyword id="KW-0862">Zinc</keyword>
<keyword id="KW-0863">Zinc-finger</keyword>
<sequence length="171" mass="18961">WYSSMFAANIKEEPMSHHHHHSHHSHGHHHSNSNSNASSPRQSPLPSPNPPSSSNLHLEQYLKQQQQHQQQQQQPMDTPLPLTPPGLPNPMQIIMPANMRPATQPTPTIATPTTTSSAIVALQSNDKLQALTPPMDVTPPKSAAKSQQSWAEPEKDHDLMSNSSEDMKYMA</sequence>
<proteinExistence type="inferred from homology"/>
<accession>O46254</accession>
<accession>O46255</accession>
<gene>
    <name type="primary">hb</name>
</gene>
<comment type="function">
    <text evidence="1">Gap class segmentation protein that controls development of head structures.</text>
</comment>
<comment type="subcellular location">
    <subcellularLocation>
        <location evidence="1">Nucleus</location>
    </subcellularLocation>
</comment>
<comment type="similarity">
    <text evidence="3">Belongs to the hunchback C2H2-type zinc-finger protein family.</text>
</comment>
<organism>
    <name type="scientific">Scaptomyza albovittata</name>
    <name type="common">Fruit fly</name>
    <dbReference type="NCBI Taxonomy" id="7299"/>
    <lineage>
        <taxon>Eukaryota</taxon>
        <taxon>Metazoa</taxon>
        <taxon>Ecdysozoa</taxon>
        <taxon>Arthropoda</taxon>
        <taxon>Hexapoda</taxon>
        <taxon>Insecta</taxon>
        <taxon>Pterygota</taxon>
        <taxon>Neoptera</taxon>
        <taxon>Endopterygota</taxon>
        <taxon>Diptera</taxon>
        <taxon>Brachycera</taxon>
        <taxon>Muscomorpha</taxon>
        <taxon>Ephydroidea</taxon>
        <taxon>Drosophilidae</taxon>
        <taxon>Scaptomyza</taxon>
    </lineage>
</organism>
<dbReference type="EMBL" id="U93018">
    <property type="protein sequence ID" value="AAC03266.1"/>
    <property type="molecule type" value="Genomic_DNA"/>
</dbReference>
<dbReference type="EMBL" id="U93019">
    <property type="protein sequence ID" value="AAC03267.1"/>
    <property type="molecule type" value="Genomic_DNA"/>
</dbReference>
<dbReference type="SMR" id="O46254"/>
<dbReference type="GO" id="GO:0005634">
    <property type="term" value="C:nucleus"/>
    <property type="evidence" value="ECO:0007669"/>
    <property type="project" value="UniProtKB-SubCell"/>
</dbReference>
<dbReference type="GO" id="GO:0003677">
    <property type="term" value="F:DNA binding"/>
    <property type="evidence" value="ECO:0007669"/>
    <property type="project" value="UniProtKB-KW"/>
</dbReference>
<dbReference type="GO" id="GO:0008270">
    <property type="term" value="F:zinc ion binding"/>
    <property type="evidence" value="ECO:0007669"/>
    <property type="project" value="UniProtKB-KW"/>
</dbReference>
<dbReference type="GO" id="GO:0035282">
    <property type="term" value="P:segmentation"/>
    <property type="evidence" value="ECO:0007669"/>
    <property type="project" value="UniProtKB-KW"/>
</dbReference>
<evidence type="ECO:0000250" key="1"/>
<evidence type="ECO:0000256" key="2">
    <source>
        <dbReference type="SAM" id="MobiDB-lite"/>
    </source>
</evidence>
<evidence type="ECO:0000305" key="3"/>
<feature type="chain" id="PRO_0000046967" description="Protein hunchback">
    <location>
        <begin position="1" status="less than"/>
        <end position="171" status="greater than"/>
    </location>
</feature>
<feature type="region of interest" description="Disordered" evidence="2">
    <location>
        <begin position="14"/>
        <end position="93"/>
    </location>
</feature>
<feature type="region of interest" description="Disordered" evidence="2">
    <location>
        <begin position="124"/>
        <end position="171"/>
    </location>
</feature>
<feature type="compositionally biased region" description="Basic residues" evidence="2">
    <location>
        <begin position="17"/>
        <end position="31"/>
    </location>
</feature>
<feature type="compositionally biased region" description="Low complexity" evidence="2">
    <location>
        <begin position="32"/>
        <end position="42"/>
    </location>
</feature>
<feature type="compositionally biased region" description="Low complexity" evidence="2">
    <location>
        <begin position="52"/>
        <end position="80"/>
    </location>
</feature>
<feature type="compositionally biased region" description="Basic and acidic residues" evidence="2">
    <location>
        <begin position="152"/>
        <end position="171"/>
    </location>
</feature>
<feature type="non-consecutive residues" evidence="3">
    <location>
        <begin position="80"/>
        <end position="81"/>
    </location>
</feature>
<feature type="non-terminal residue">
    <location>
        <position position="1"/>
    </location>
</feature>
<feature type="non-terminal residue">
    <location>
        <position position="171"/>
    </location>
</feature>
<name>HUNB_SCAAL</name>
<reference key="1">
    <citation type="journal article" date="1997" name="Syst. Biol.">
        <title>Multiple sources of character information and the phylogeny of Hawaiian Drosophilids.</title>
        <authorList>
            <person name="Baker R.H."/>
            <person name="DeSalle R."/>
        </authorList>
    </citation>
    <scope>NUCLEOTIDE SEQUENCE [GENOMIC DNA]</scope>
</reference>